<organism>
    <name type="scientific">Chlamydia felis (strain Fe/C-56)</name>
    <name type="common">Chlamydophila felis</name>
    <dbReference type="NCBI Taxonomy" id="264202"/>
    <lineage>
        <taxon>Bacteria</taxon>
        <taxon>Pseudomonadati</taxon>
        <taxon>Chlamydiota</taxon>
        <taxon>Chlamydiia</taxon>
        <taxon>Chlamydiales</taxon>
        <taxon>Chlamydiaceae</taxon>
        <taxon>Chlamydia/Chlamydophila group</taxon>
        <taxon>Chlamydia</taxon>
    </lineage>
</organism>
<keyword id="KW-0678">Repressor</keyword>
<keyword id="KW-0346">Stress response</keyword>
<keyword id="KW-0804">Transcription</keyword>
<keyword id="KW-0805">Transcription regulation</keyword>
<sequence length="386" mass="44160">MSRSWISKRESKILYILLTTTELYLKTGQPVGSKTLKEYECSNLSTATIRNYFSELESEGFLKKNHISGGRIPTDLAFRYYVDHCADFSQSELPESTTRLLNQLPEESQNIVKDLQKALEILGEALQLPTCFSSPRFENDSITNIQISLVDEQRVVVILSTEFGQVFTETLWLPETSSPASVKRIETFLQSYVRKQPPTEILSQKEEDLGMTLYNEVVVRYLTRYCNFSEEDLYQTGLSKLLKYDAFKDPDTLALGLSFFENRRHMCKLLDIGMHRDRPTAFIGNELSTIFGTPNPQCAVITTPYYMNRTPLGAFGVLGPINLPYREIFQTLTIFADKVKDSLTQSFYKFKLSFRRPCPSDPKLSKEPTLLARYSSIKLLPPKETS</sequence>
<reference key="1">
    <citation type="journal article" date="2006" name="DNA Res.">
        <title>Genome sequence of the cat pathogen, Chlamydophila felis.</title>
        <authorList>
            <person name="Azuma Y."/>
            <person name="Hirakawa H."/>
            <person name="Yamashita A."/>
            <person name="Cai Y."/>
            <person name="Rahman M.A."/>
            <person name="Suzuki H."/>
            <person name="Mitaku S."/>
            <person name="Toh H."/>
            <person name="Goto S."/>
            <person name="Murakami T."/>
            <person name="Sugi K."/>
            <person name="Hayashi H."/>
            <person name="Fukushi H."/>
            <person name="Hattori M."/>
            <person name="Kuhara S."/>
            <person name="Shirai M."/>
        </authorList>
    </citation>
    <scope>NUCLEOTIDE SEQUENCE [LARGE SCALE GENOMIC DNA]</scope>
    <source>
        <strain>Fe/C-56</strain>
    </source>
</reference>
<feature type="chain" id="PRO_1000010394" description="Heat-inducible transcription repressor HrcA">
    <location>
        <begin position="1"/>
        <end position="386"/>
    </location>
</feature>
<comment type="function">
    <text evidence="1">Negative regulator of class I heat shock genes (grpE-dnaK-dnaJ and groELS operons). Prevents heat-shock induction of these operons.</text>
</comment>
<comment type="similarity">
    <text evidence="1">Belongs to the HrcA family.</text>
</comment>
<proteinExistence type="inferred from homology"/>
<dbReference type="EMBL" id="AP006861">
    <property type="protein sequence ID" value="BAE81535.1"/>
    <property type="molecule type" value="Genomic_DNA"/>
</dbReference>
<dbReference type="RefSeq" id="WP_011458313.1">
    <property type="nucleotide sequence ID" value="NC_007899.1"/>
</dbReference>
<dbReference type="SMR" id="Q253K3"/>
<dbReference type="STRING" id="264202.CF0763"/>
<dbReference type="KEGG" id="cfe:CF0763"/>
<dbReference type="eggNOG" id="COG1420">
    <property type="taxonomic scope" value="Bacteria"/>
</dbReference>
<dbReference type="HOGENOM" id="CLU_050019_1_0_0"/>
<dbReference type="OrthoDB" id="9783139at2"/>
<dbReference type="Proteomes" id="UP000001260">
    <property type="component" value="Chromosome"/>
</dbReference>
<dbReference type="GO" id="GO:0003677">
    <property type="term" value="F:DNA binding"/>
    <property type="evidence" value="ECO:0007669"/>
    <property type="project" value="InterPro"/>
</dbReference>
<dbReference type="GO" id="GO:0045892">
    <property type="term" value="P:negative regulation of DNA-templated transcription"/>
    <property type="evidence" value="ECO:0007669"/>
    <property type="project" value="UniProtKB-UniRule"/>
</dbReference>
<dbReference type="FunFam" id="1.10.10.10:FF:000785">
    <property type="entry name" value="Heat-inducible transcription repressor HrcA"/>
    <property type="match status" value="1"/>
</dbReference>
<dbReference type="Gene3D" id="3.30.450.40">
    <property type="match status" value="1"/>
</dbReference>
<dbReference type="Gene3D" id="1.10.10.10">
    <property type="entry name" value="Winged helix-like DNA-binding domain superfamily/Winged helix DNA-binding domain"/>
    <property type="match status" value="1"/>
</dbReference>
<dbReference type="HAMAP" id="MF_00081">
    <property type="entry name" value="HrcA"/>
    <property type="match status" value="1"/>
</dbReference>
<dbReference type="InterPro" id="IPR029016">
    <property type="entry name" value="GAF-like_dom_sf"/>
</dbReference>
<dbReference type="InterPro" id="IPR002571">
    <property type="entry name" value="HrcA"/>
</dbReference>
<dbReference type="InterPro" id="IPR021153">
    <property type="entry name" value="HrcA_C"/>
</dbReference>
<dbReference type="InterPro" id="IPR036388">
    <property type="entry name" value="WH-like_DNA-bd_sf"/>
</dbReference>
<dbReference type="InterPro" id="IPR036390">
    <property type="entry name" value="WH_DNA-bd_sf"/>
</dbReference>
<dbReference type="NCBIfam" id="TIGR00331">
    <property type="entry name" value="hrcA"/>
    <property type="match status" value="1"/>
</dbReference>
<dbReference type="PANTHER" id="PTHR34824">
    <property type="entry name" value="HEAT-INDUCIBLE TRANSCRIPTION REPRESSOR HRCA"/>
    <property type="match status" value="1"/>
</dbReference>
<dbReference type="PANTHER" id="PTHR34824:SF1">
    <property type="entry name" value="HEAT-INDUCIBLE TRANSCRIPTION REPRESSOR HRCA"/>
    <property type="match status" value="1"/>
</dbReference>
<dbReference type="Pfam" id="PF01628">
    <property type="entry name" value="HrcA"/>
    <property type="match status" value="1"/>
</dbReference>
<dbReference type="PIRSF" id="PIRSF005485">
    <property type="entry name" value="HrcA"/>
    <property type="match status" value="1"/>
</dbReference>
<dbReference type="SUPFAM" id="SSF55781">
    <property type="entry name" value="GAF domain-like"/>
    <property type="match status" value="1"/>
</dbReference>
<dbReference type="SUPFAM" id="SSF46785">
    <property type="entry name" value="Winged helix' DNA-binding domain"/>
    <property type="match status" value="1"/>
</dbReference>
<name>HRCA_CHLFF</name>
<gene>
    <name evidence="1" type="primary">hrcA</name>
    <name type="ordered locus">CF0763</name>
</gene>
<accession>Q253K3</accession>
<evidence type="ECO:0000255" key="1">
    <source>
        <dbReference type="HAMAP-Rule" id="MF_00081"/>
    </source>
</evidence>
<protein>
    <recommendedName>
        <fullName evidence="1">Heat-inducible transcription repressor HrcA</fullName>
    </recommendedName>
</protein>